<dbReference type="EC" id="7.4.2.8" evidence="1"/>
<dbReference type="EMBL" id="AE016823">
    <property type="protein sequence ID" value="AAS70526.1"/>
    <property type="molecule type" value="Genomic_DNA"/>
</dbReference>
<dbReference type="SMR" id="Q72R08"/>
<dbReference type="KEGG" id="lic:LIC_11944"/>
<dbReference type="HOGENOM" id="CLU_005314_3_0_12"/>
<dbReference type="Proteomes" id="UP000007037">
    <property type="component" value="Chromosome I"/>
</dbReference>
<dbReference type="GO" id="GO:0031522">
    <property type="term" value="C:cell envelope Sec protein transport complex"/>
    <property type="evidence" value="ECO:0007669"/>
    <property type="project" value="TreeGrafter"/>
</dbReference>
<dbReference type="GO" id="GO:0005829">
    <property type="term" value="C:cytosol"/>
    <property type="evidence" value="ECO:0007669"/>
    <property type="project" value="TreeGrafter"/>
</dbReference>
<dbReference type="GO" id="GO:0005886">
    <property type="term" value="C:plasma membrane"/>
    <property type="evidence" value="ECO:0007669"/>
    <property type="project" value="UniProtKB-SubCell"/>
</dbReference>
<dbReference type="GO" id="GO:0005524">
    <property type="term" value="F:ATP binding"/>
    <property type="evidence" value="ECO:0007669"/>
    <property type="project" value="UniProtKB-UniRule"/>
</dbReference>
<dbReference type="GO" id="GO:0008564">
    <property type="term" value="F:protein-exporting ATPase activity"/>
    <property type="evidence" value="ECO:0007669"/>
    <property type="project" value="UniProtKB-EC"/>
</dbReference>
<dbReference type="GO" id="GO:0065002">
    <property type="term" value="P:intracellular protein transmembrane transport"/>
    <property type="evidence" value="ECO:0007669"/>
    <property type="project" value="UniProtKB-UniRule"/>
</dbReference>
<dbReference type="GO" id="GO:0017038">
    <property type="term" value="P:protein import"/>
    <property type="evidence" value="ECO:0007669"/>
    <property type="project" value="InterPro"/>
</dbReference>
<dbReference type="GO" id="GO:0006605">
    <property type="term" value="P:protein targeting"/>
    <property type="evidence" value="ECO:0007669"/>
    <property type="project" value="UniProtKB-UniRule"/>
</dbReference>
<dbReference type="GO" id="GO:0043952">
    <property type="term" value="P:protein transport by the Sec complex"/>
    <property type="evidence" value="ECO:0007669"/>
    <property type="project" value="TreeGrafter"/>
</dbReference>
<dbReference type="CDD" id="cd17928">
    <property type="entry name" value="DEXDc_SecA"/>
    <property type="match status" value="1"/>
</dbReference>
<dbReference type="CDD" id="cd18803">
    <property type="entry name" value="SF2_C_secA"/>
    <property type="match status" value="1"/>
</dbReference>
<dbReference type="FunFam" id="3.40.50.300:FF:000113">
    <property type="entry name" value="Preprotein translocase subunit SecA"/>
    <property type="match status" value="1"/>
</dbReference>
<dbReference type="FunFam" id="1.10.3060.10:FF:000003">
    <property type="entry name" value="Protein translocase subunit SecA"/>
    <property type="match status" value="1"/>
</dbReference>
<dbReference type="FunFam" id="3.90.1440.10:FF:000002">
    <property type="entry name" value="Protein translocase subunit SecA"/>
    <property type="match status" value="1"/>
</dbReference>
<dbReference type="Gene3D" id="1.10.3060.10">
    <property type="entry name" value="Helical scaffold and wing domains of SecA"/>
    <property type="match status" value="1"/>
</dbReference>
<dbReference type="Gene3D" id="3.40.50.300">
    <property type="entry name" value="P-loop containing nucleotide triphosphate hydrolases"/>
    <property type="match status" value="2"/>
</dbReference>
<dbReference type="Gene3D" id="3.90.1440.10">
    <property type="entry name" value="SecA, preprotein cross-linking domain"/>
    <property type="match status" value="1"/>
</dbReference>
<dbReference type="HAMAP" id="MF_01382">
    <property type="entry name" value="SecA"/>
    <property type="match status" value="1"/>
</dbReference>
<dbReference type="InterPro" id="IPR014001">
    <property type="entry name" value="Helicase_ATP-bd"/>
</dbReference>
<dbReference type="InterPro" id="IPR027417">
    <property type="entry name" value="P-loop_NTPase"/>
</dbReference>
<dbReference type="InterPro" id="IPR000185">
    <property type="entry name" value="SecA"/>
</dbReference>
<dbReference type="InterPro" id="IPR020937">
    <property type="entry name" value="SecA_CS"/>
</dbReference>
<dbReference type="InterPro" id="IPR011115">
    <property type="entry name" value="SecA_DEAD"/>
</dbReference>
<dbReference type="InterPro" id="IPR014018">
    <property type="entry name" value="SecA_motor_DEAD"/>
</dbReference>
<dbReference type="InterPro" id="IPR011130">
    <property type="entry name" value="SecA_preprotein_X-link_dom"/>
</dbReference>
<dbReference type="InterPro" id="IPR044722">
    <property type="entry name" value="SecA_SF2_C"/>
</dbReference>
<dbReference type="InterPro" id="IPR011116">
    <property type="entry name" value="SecA_Wing/Scaffold"/>
</dbReference>
<dbReference type="InterPro" id="IPR036266">
    <property type="entry name" value="SecA_Wing/Scaffold_sf"/>
</dbReference>
<dbReference type="InterPro" id="IPR036670">
    <property type="entry name" value="SecA_X-link_sf"/>
</dbReference>
<dbReference type="NCBIfam" id="NF009538">
    <property type="entry name" value="PRK12904.1"/>
    <property type="match status" value="1"/>
</dbReference>
<dbReference type="NCBIfam" id="TIGR00963">
    <property type="entry name" value="secA"/>
    <property type="match status" value="1"/>
</dbReference>
<dbReference type="PANTHER" id="PTHR30612:SF0">
    <property type="entry name" value="CHLOROPLAST PROTEIN-TRANSPORTING ATPASE"/>
    <property type="match status" value="1"/>
</dbReference>
<dbReference type="PANTHER" id="PTHR30612">
    <property type="entry name" value="SECA INNER MEMBRANE COMPONENT OF SEC PROTEIN SECRETION SYSTEM"/>
    <property type="match status" value="1"/>
</dbReference>
<dbReference type="Pfam" id="PF21090">
    <property type="entry name" value="P-loop_SecA"/>
    <property type="match status" value="1"/>
</dbReference>
<dbReference type="Pfam" id="PF07517">
    <property type="entry name" value="SecA_DEAD"/>
    <property type="match status" value="1"/>
</dbReference>
<dbReference type="Pfam" id="PF01043">
    <property type="entry name" value="SecA_PP_bind"/>
    <property type="match status" value="1"/>
</dbReference>
<dbReference type="Pfam" id="PF07516">
    <property type="entry name" value="SecA_SW"/>
    <property type="match status" value="1"/>
</dbReference>
<dbReference type="PRINTS" id="PR00906">
    <property type="entry name" value="SECA"/>
</dbReference>
<dbReference type="SMART" id="SM00957">
    <property type="entry name" value="SecA_DEAD"/>
    <property type="match status" value="1"/>
</dbReference>
<dbReference type="SMART" id="SM00958">
    <property type="entry name" value="SecA_PP_bind"/>
    <property type="match status" value="1"/>
</dbReference>
<dbReference type="SUPFAM" id="SSF81886">
    <property type="entry name" value="Helical scaffold and wing domains of SecA"/>
    <property type="match status" value="1"/>
</dbReference>
<dbReference type="SUPFAM" id="SSF52540">
    <property type="entry name" value="P-loop containing nucleoside triphosphate hydrolases"/>
    <property type="match status" value="2"/>
</dbReference>
<dbReference type="SUPFAM" id="SSF81767">
    <property type="entry name" value="Pre-protein crosslinking domain of SecA"/>
    <property type="match status" value="1"/>
</dbReference>
<dbReference type="PROSITE" id="PS01312">
    <property type="entry name" value="SECA"/>
    <property type="match status" value="1"/>
</dbReference>
<dbReference type="PROSITE" id="PS51196">
    <property type="entry name" value="SECA_MOTOR_DEAD"/>
    <property type="match status" value="1"/>
</dbReference>
<feature type="chain" id="PRO_1000073489" description="Protein translocase subunit SecA">
    <location>
        <begin position="1"/>
        <end position="910"/>
    </location>
</feature>
<feature type="region of interest" description="Disordered" evidence="2">
    <location>
        <begin position="873"/>
        <end position="910"/>
    </location>
</feature>
<feature type="compositionally biased region" description="Polar residues" evidence="2">
    <location>
        <begin position="876"/>
        <end position="886"/>
    </location>
</feature>
<feature type="binding site" evidence="1">
    <location>
        <position position="89"/>
    </location>
    <ligand>
        <name>ATP</name>
        <dbReference type="ChEBI" id="CHEBI:30616"/>
    </ligand>
</feature>
<feature type="binding site" evidence="1">
    <location>
        <begin position="107"/>
        <end position="111"/>
    </location>
    <ligand>
        <name>ATP</name>
        <dbReference type="ChEBI" id="CHEBI:30616"/>
    </ligand>
</feature>
<feature type="binding site" evidence="1">
    <location>
        <position position="496"/>
    </location>
    <ligand>
        <name>ATP</name>
        <dbReference type="ChEBI" id="CHEBI:30616"/>
    </ligand>
</feature>
<proteinExistence type="inferred from homology"/>
<sequence length="910" mass="103530">MNMIQNILRVVFGSKFERDLKKLIPIVRQINSLEESIKGMDDSTLSSQTKKFKERIVQGESLDSILPEAFATVREVSLRTMGMRHFDVQMMGGIALHGGNISEMKTGEGKTLTSTLAVYLNSLAGNGVHVVTVNDYLAKRDANWMKPIYDFLGISVGVIQHDMDHEQRKVAYAADITYGTNNEFGFDYLRDNMVSHKDHKVQRSHFFAIVDEVDSILIDEARTPLIISGPSDEATDKYVRVNKIIPKLSEGEDFEVDEKARNVLLTEKGVSHVEEILSIENLYAPENVDLVHHVHQALKAHKIFRVDKDYVVQQGQVVIIDEFTGRPMEGRRYSDGLHQAIEAKENVTIAKESQTLASITFQNYFRMYDKLAGMTGTADTEAEEFKKIYNLDVIVIPPNVSVQRKDSPDRVYRTEKEKFQAILTEIRELQSKKQPVLVGTISIEKSEVLSKMLASAGIQHNVLNAKFHQKEAEIVANAGKPGAVTIATNMAGRGTDIVLGGAQLYKENLETWKDEDEIVKQFKESILRQNLEYAESLMQKMDSGTKQKRASEILSSVKIWKKNHEEVLAAGGLHILGTERHEARRIDNQLRGRSGRQGDPGSSRFYLSLQDDLMRIFGSDRISGLMKWANMPEGQEIESKMVSNAIARAQKRVEGHNFDIRKHLLEYDDVMNRQRIVIYKMRNEVLENEDISPLISGFIEETVENQIVTHCEGNNPSAWNLESLKEWSDGLDLNLQIDEVEFKKSKNPQLSLFEKVSSTAKLKYESKAEKIGKDIWKLLERNIFLDILDHRWKEHLYSMDHLREGIWTVGYSERNPLVEYKLQGFRMFDTAIENLKNEIVNFIFRVEVSENSKLPEEKKEYKKVGQEITGGFQEFSGGNLNRSQSNGSSVTVTTSSGGGTERKTSRRRKR</sequence>
<organism>
    <name type="scientific">Leptospira interrogans serogroup Icterohaemorrhagiae serovar copenhageni (strain Fiocruz L1-130)</name>
    <dbReference type="NCBI Taxonomy" id="267671"/>
    <lineage>
        <taxon>Bacteria</taxon>
        <taxon>Pseudomonadati</taxon>
        <taxon>Spirochaetota</taxon>
        <taxon>Spirochaetia</taxon>
        <taxon>Leptospirales</taxon>
        <taxon>Leptospiraceae</taxon>
        <taxon>Leptospira</taxon>
    </lineage>
</organism>
<evidence type="ECO:0000255" key="1">
    <source>
        <dbReference type="HAMAP-Rule" id="MF_01382"/>
    </source>
</evidence>
<evidence type="ECO:0000256" key="2">
    <source>
        <dbReference type="SAM" id="MobiDB-lite"/>
    </source>
</evidence>
<comment type="function">
    <text evidence="1">Part of the Sec protein translocase complex. Interacts with the SecYEG preprotein conducting channel. Has a central role in coupling the hydrolysis of ATP to the transfer of proteins into and across the cell membrane, serving as an ATP-driven molecular motor driving the stepwise translocation of polypeptide chains across the membrane.</text>
</comment>
<comment type="catalytic activity">
    <reaction evidence="1">
        <text>ATP + H2O + cellular proteinSide 1 = ADP + phosphate + cellular proteinSide 2.</text>
        <dbReference type="EC" id="7.4.2.8"/>
    </reaction>
</comment>
<comment type="subunit">
    <text evidence="1">Monomer and homodimer. Part of the essential Sec protein translocation apparatus which comprises SecA, SecYEG and auxiliary proteins SecDF. Other proteins may also be involved.</text>
</comment>
<comment type="subcellular location">
    <subcellularLocation>
        <location evidence="1">Cell inner membrane</location>
        <topology evidence="1">Peripheral membrane protein</topology>
        <orientation evidence="1">Cytoplasmic side</orientation>
    </subcellularLocation>
    <subcellularLocation>
        <location evidence="1">Cytoplasm</location>
    </subcellularLocation>
    <text evidence="1">Distribution is 50-50.</text>
</comment>
<comment type="similarity">
    <text evidence="1">Belongs to the SecA family.</text>
</comment>
<keyword id="KW-0067">ATP-binding</keyword>
<keyword id="KW-0997">Cell inner membrane</keyword>
<keyword id="KW-1003">Cell membrane</keyword>
<keyword id="KW-0963">Cytoplasm</keyword>
<keyword id="KW-0472">Membrane</keyword>
<keyword id="KW-0547">Nucleotide-binding</keyword>
<keyword id="KW-0653">Protein transport</keyword>
<keyword id="KW-1278">Translocase</keyword>
<keyword id="KW-0811">Translocation</keyword>
<keyword id="KW-0813">Transport</keyword>
<name>SECA_LEPIC</name>
<protein>
    <recommendedName>
        <fullName evidence="1">Protein translocase subunit SecA</fullName>
        <ecNumber evidence="1">7.4.2.8</ecNumber>
    </recommendedName>
</protein>
<gene>
    <name evidence="1" type="primary">secA</name>
    <name type="ordered locus">LIC_11944</name>
</gene>
<accession>Q72R08</accession>
<reference key="1">
    <citation type="journal article" date="2004" name="J. Bacteriol.">
        <title>Comparative genomics of two Leptospira interrogans serovars reveals novel insights into physiology and pathogenesis.</title>
        <authorList>
            <person name="Nascimento A.L.T.O."/>
            <person name="Ko A.I."/>
            <person name="Martins E.A.L."/>
            <person name="Monteiro-Vitorello C.B."/>
            <person name="Ho P.L."/>
            <person name="Haake D.A."/>
            <person name="Verjovski-Almeida S."/>
            <person name="Hartskeerl R.A."/>
            <person name="Marques M.V."/>
            <person name="Oliveira M.C."/>
            <person name="Menck C.F.M."/>
            <person name="Leite L.C.C."/>
            <person name="Carrer H."/>
            <person name="Coutinho L.L."/>
            <person name="Degrave W.M."/>
            <person name="Dellagostin O.A."/>
            <person name="El-Dorry H."/>
            <person name="Ferro E.S."/>
            <person name="Ferro M.I.T."/>
            <person name="Furlan L.R."/>
            <person name="Gamberini M."/>
            <person name="Giglioti E.A."/>
            <person name="Goes-Neto A."/>
            <person name="Goldman G.H."/>
            <person name="Goldman M.H.S."/>
            <person name="Harakava R."/>
            <person name="Jeronimo S.M.B."/>
            <person name="Junqueira-de-Azevedo I.L.M."/>
            <person name="Kimura E.T."/>
            <person name="Kuramae E.E."/>
            <person name="Lemos E.G.M."/>
            <person name="Lemos M.V.F."/>
            <person name="Marino C.L."/>
            <person name="Nunes L.R."/>
            <person name="de Oliveira R.C."/>
            <person name="Pereira G.G."/>
            <person name="Reis M.S."/>
            <person name="Schriefer A."/>
            <person name="Siqueira W.J."/>
            <person name="Sommer P."/>
            <person name="Tsai S.M."/>
            <person name="Simpson A.J.G."/>
            <person name="Ferro J.A."/>
            <person name="Camargo L.E.A."/>
            <person name="Kitajima J.P."/>
            <person name="Setubal J.C."/>
            <person name="Van Sluys M.A."/>
        </authorList>
    </citation>
    <scope>NUCLEOTIDE SEQUENCE [LARGE SCALE GENOMIC DNA]</scope>
    <source>
        <strain>Fiocruz L1-130</strain>
    </source>
</reference>